<organism>
    <name type="scientific">Burkholderia mallei (strain ATCC 23344)</name>
    <dbReference type="NCBI Taxonomy" id="243160"/>
    <lineage>
        <taxon>Bacteria</taxon>
        <taxon>Pseudomonadati</taxon>
        <taxon>Pseudomonadota</taxon>
        <taxon>Betaproteobacteria</taxon>
        <taxon>Burkholderiales</taxon>
        <taxon>Burkholderiaceae</taxon>
        <taxon>Burkholderia</taxon>
        <taxon>pseudomallei group</taxon>
    </lineage>
</organism>
<gene>
    <name evidence="1" type="primary">rplS</name>
    <name type="ordered locus">BMA0400</name>
</gene>
<dbReference type="EMBL" id="CP000010">
    <property type="protein sequence ID" value="AAU48777.1"/>
    <property type="molecule type" value="Genomic_DNA"/>
</dbReference>
<dbReference type="RefSeq" id="WP_004189360.1">
    <property type="nucleotide sequence ID" value="NC_006348.1"/>
</dbReference>
<dbReference type="RefSeq" id="YP_102215.1">
    <property type="nucleotide sequence ID" value="NC_006348.1"/>
</dbReference>
<dbReference type="SMR" id="Q62M53"/>
<dbReference type="GeneID" id="93061076"/>
<dbReference type="KEGG" id="bma:BMA0400"/>
<dbReference type="PATRIC" id="fig|243160.12.peg.405"/>
<dbReference type="eggNOG" id="COG0335">
    <property type="taxonomic scope" value="Bacteria"/>
</dbReference>
<dbReference type="HOGENOM" id="CLU_103507_1_0_4"/>
<dbReference type="Proteomes" id="UP000006693">
    <property type="component" value="Chromosome 1"/>
</dbReference>
<dbReference type="GO" id="GO:0022625">
    <property type="term" value="C:cytosolic large ribosomal subunit"/>
    <property type="evidence" value="ECO:0007669"/>
    <property type="project" value="TreeGrafter"/>
</dbReference>
<dbReference type="GO" id="GO:0003735">
    <property type="term" value="F:structural constituent of ribosome"/>
    <property type="evidence" value="ECO:0007669"/>
    <property type="project" value="InterPro"/>
</dbReference>
<dbReference type="GO" id="GO:0006412">
    <property type="term" value="P:translation"/>
    <property type="evidence" value="ECO:0007669"/>
    <property type="project" value="UniProtKB-UniRule"/>
</dbReference>
<dbReference type="FunFam" id="2.30.30.790:FF:000001">
    <property type="entry name" value="50S ribosomal protein L19"/>
    <property type="match status" value="1"/>
</dbReference>
<dbReference type="Gene3D" id="2.30.30.790">
    <property type="match status" value="1"/>
</dbReference>
<dbReference type="HAMAP" id="MF_00402">
    <property type="entry name" value="Ribosomal_bL19"/>
    <property type="match status" value="1"/>
</dbReference>
<dbReference type="InterPro" id="IPR001857">
    <property type="entry name" value="Ribosomal_bL19"/>
</dbReference>
<dbReference type="InterPro" id="IPR018257">
    <property type="entry name" value="Ribosomal_bL19_CS"/>
</dbReference>
<dbReference type="InterPro" id="IPR038657">
    <property type="entry name" value="Ribosomal_bL19_sf"/>
</dbReference>
<dbReference type="InterPro" id="IPR008991">
    <property type="entry name" value="Translation_prot_SH3-like_sf"/>
</dbReference>
<dbReference type="NCBIfam" id="TIGR01024">
    <property type="entry name" value="rplS_bact"/>
    <property type="match status" value="1"/>
</dbReference>
<dbReference type="PANTHER" id="PTHR15680:SF9">
    <property type="entry name" value="LARGE RIBOSOMAL SUBUNIT PROTEIN BL19M"/>
    <property type="match status" value="1"/>
</dbReference>
<dbReference type="PANTHER" id="PTHR15680">
    <property type="entry name" value="RIBOSOMAL PROTEIN L19"/>
    <property type="match status" value="1"/>
</dbReference>
<dbReference type="Pfam" id="PF01245">
    <property type="entry name" value="Ribosomal_L19"/>
    <property type="match status" value="1"/>
</dbReference>
<dbReference type="PIRSF" id="PIRSF002191">
    <property type="entry name" value="Ribosomal_L19"/>
    <property type="match status" value="1"/>
</dbReference>
<dbReference type="PRINTS" id="PR00061">
    <property type="entry name" value="RIBOSOMALL19"/>
</dbReference>
<dbReference type="SUPFAM" id="SSF50104">
    <property type="entry name" value="Translation proteins SH3-like domain"/>
    <property type="match status" value="1"/>
</dbReference>
<dbReference type="PROSITE" id="PS01015">
    <property type="entry name" value="RIBOSOMAL_L19"/>
    <property type="match status" value="1"/>
</dbReference>
<keyword id="KW-1185">Reference proteome</keyword>
<keyword id="KW-0687">Ribonucleoprotein</keyword>
<keyword id="KW-0689">Ribosomal protein</keyword>
<reference key="1">
    <citation type="journal article" date="2004" name="Proc. Natl. Acad. Sci. U.S.A.">
        <title>Structural flexibility in the Burkholderia mallei genome.</title>
        <authorList>
            <person name="Nierman W.C."/>
            <person name="DeShazer D."/>
            <person name="Kim H.S."/>
            <person name="Tettelin H."/>
            <person name="Nelson K.E."/>
            <person name="Feldblyum T.V."/>
            <person name="Ulrich R.L."/>
            <person name="Ronning C.M."/>
            <person name="Brinkac L.M."/>
            <person name="Daugherty S.C."/>
            <person name="Davidsen T.D."/>
            <person name="DeBoy R.T."/>
            <person name="Dimitrov G."/>
            <person name="Dodson R.J."/>
            <person name="Durkin A.S."/>
            <person name="Gwinn M.L."/>
            <person name="Haft D.H."/>
            <person name="Khouri H.M."/>
            <person name="Kolonay J.F."/>
            <person name="Madupu R."/>
            <person name="Mohammoud Y."/>
            <person name="Nelson W.C."/>
            <person name="Radune D."/>
            <person name="Romero C.M."/>
            <person name="Sarria S."/>
            <person name="Selengut J."/>
            <person name="Shamblin C."/>
            <person name="Sullivan S.A."/>
            <person name="White O."/>
            <person name="Yu Y."/>
            <person name="Zafar N."/>
            <person name="Zhou L."/>
            <person name="Fraser C.M."/>
        </authorList>
    </citation>
    <scope>NUCLEOTIDE SEQUENCE [LARGE SCALE GENOMIC DNA]</scope>
    <source>
        <strain>ATCC 23344</strain>
    </source>
</reference>
<comment type="function">
    <text evidence="1">This protein is located at the 30S-50S ribosomal subunit interface and may play a role in the structure and function of the aminoacyl-tRNA binding site.</text>
</comment>
<comment type="similarity">
    <text evidence="1">Belongs to the bacterial ribosomal protein bL19 family.</text>
</comment>
<name>RL19_BURMA</name>
<feature type="chain" id="PRO_0000163429" description="Large ribosomal subunit protein bL19">
    <location>
        <begin position="1"/>
        <end position="129"/>
    </location>
</feature>
<evidence type="ECO:0000255" key="1">
    <source>
        <dbReference type="HAMAP-Rule" id="MF_00402"/>
    </source>
</evidence>
<evidence type="ECO:0000305" key="2"/>
<sequence>MNLIAKLEQEEIERALAGKTIPEFAPGDTVIVNVNVVEGNRKRVQAYEGVVIAKRNRGLNSSFIVRKISSGEGVERTFQTYSPLLASIVVKRRGDVRRAKLYYLRERSGKSARIKEKLVSKDRAAAAQQ</sequence>
<protein>
    <recommendedName>
        <fullName evidence="1">Large ribosomal subunit protein bL19</fullName>
    </recommendedName>
    <alternativeName>
        <fullName evidence="2">50S ribosomal protein L19</fullName>
    </alternativeName>
</protein>
<accession>Q62M53</accession>
<proteinExistence type="inferred from homology"/>